<comment type="function">
    <text evidence="1">Required for maturation of urease via the functional incorporation of the urease nickel metallocenter.</text>
</comment>
<comment type="subunit">
    <text evidence="1">UreD, UreF and UreG form a complex that acts as a GTP-hydrolysis-dependent molecular chaperone, activating the urease apoprotein by helping to assemble the nickel containing metallocenter of UreC. The UreE protein probably delivers the nickel.</text>
</comment>
<comment type="subcellular location">
    <subcellularLocation>
        <location evidence="1">Cytoplasm</location>
    </subcellularLocation>
</comment>
<comment type="similarity">
    <text evidence="1">Belongs to the UreD family.</text>
</comment>
<comment type="sequence caution" evidence="2">
    <conflict type="erroneous initiation">
        <sequence resource="EMBL-CDS" id="AAL52836"/>
    </conflict>
</comment>
<evidence type="ECO:0000255" key="1">
    <source>
        <dbReference type="HAMAP-Rule" id="MF_01384"/>
    </source>
</evidence>
<evidence type="ECO:0000305" key="2"/>
<feature type="chain" id="PRO_0000340423" description="Urease accessory protein UreD 1">
    <location>
        <begin position="1"/>
        <end position="280"/>
    </location>
</feature>
<name>URED1_BRUME</name>
<gene>
    <name evidence="1" type="primary">ureD1</name>
    <name type="ordered locus">BMEI1655</name>
</gene>
<proteinExistence type="inferred from homology"/>
<reference key="1">
    <citation type="journal article" date="2002" name="Proc. Natl. Acad. Sci. U.S.A.">
        <title>The genome sequence of the facultative intracellular pathogen Brucella melitensis.</title>
        <authorList>
            <person name="DelVecchio V.G."/>
            <person name="Kapatral V."/>
            <person name="Redkar R.J."/>
            <person name="Patra G."/>
            <person name="Mujer C."/>
            <person name="Los T."/>
            <person name="Ivanova N."/>
            <person name="Anderson I."/>
            <person name="Bhattacharyya A."/>
            <person name="Lykidis A."/>
            <person name="Reznik G."/>
            <person name="Jablonski L."/>
            <person name="Larsen N."/>
            <person name="D'Souza M."/>
            <person name="Bernal A."/>
            <person name="Mazur M."/>
            <person name="Goltsman E."/>
            <person name="Selkov E."/>
            <person name="Elzer P.H."/>
            <person name="Hagius S."/>
            <person name="O'Callaghan D."/>
            <person name="Letesson J.-J."/>
            <person name="Haselkorn R."/>
            <person name="Kyrpides N.C."/>
            <person name="Overbeek R."/>
        </authorList>
    </citation>
    <scope>NUCLEOTIDE SEQUENCE [LARGE SCALE GENOMIC DNA]</scope>
    <source>
        <strain>ATCC 23456 / CCUG 17765 / NCTC 10094 / 16M</strain>
    </source>
</reference>
<accession>Q8YF70</accession>
<sequence>MLIINDNNLSGLSLQRVNGTGELSVQFKDGRSRISRLYQEGAAKIRMPQAVTGPLEAILINTSGGLTGGDRLKWDVALDDGASAVITTQACERIYRSGGGEARIATRLKAAKGTRLAWLPQETILFNRSILSRRLDVELEEGAQMLVVEATVFGRLAMGERVVAARFADRWRVRLGGRVIHAEEFRLGPDVGAELQATAVAGGACAMATVLMVCEQAGRHLETARAIIGEEGGCSLWRVGKASKLVVRLYAPDSYALRRRLCPLVALLNGKAGLPKVWTI</sequence>
<protein>
    <recommendedName>
        <fullName evidence="1">Urease accessory protein UreD 1</fullName>
    </recommendedName>
</protein>
<dbReference type="EMBL" id="AE008917">
    <property type="protein sequence ID" value="AAL52836.1"/>
    <property type="status" value="ALT_INIT"/>
    <property type="molecule type" value="Genomic_DNA"/>
</dbReference>
<dbReference type="PIR" id="AI3458">
    <property type="entry name" value="AI3458"/>
</dbReference>
<dbReference type="RefSeq" id="WP_004682792.1">
    <property type="nucleotide sequence ID" value="NZ_GG703778.1"/>
</dbReference>
<dbReference type="SMR" id="Q8YF70"/>
<dbReference type="GeneID" id="29594505"/>
<dbReference type="KEGG" id="bme:BMEI1655"/>
<dbReference type="KEGG" id="bmel:DK63_1834"/>
<dbReference type="PATRIC" id="fig|224914.52.peg.1935"/>
<dbReference type="eggNOG" id="COG0829">
    <property type="taxonomic scope" value="Bacteria"/>
</dbReference>
<dbReference type="PhylomeDB" id="Q8YF70"/>
<dbReference type="Proteomes" id="UP000000419">
    <property type="component" value="Chromosome I"/>
</dbReference>
<dbReference type="GO" id="GO:0005737">
    <property type="term" value="C:cytoplasm"/>
    <property type="evidence" value="ECO:0007669"/>
    <property type="project" value="UniProtKB-SubCell"/>
</dbReference>
<dbReference type="GO" id="GO:0016151">
    <property type="term" value="F:nickel cation binding"/>
    <property type="evidence" value="ECO:0007669"/>
    <property type="project" value="UniProtKB-UniRule"/>
</dbReference>
<dbReference type="HAMAP" id="MF_01384">
    <property type="entry name" value="UreD"/>
    <property type="match status" value="1"/>
</dbReference>
<dbReference type="InterPro" id="IPR002669">
    <property type="entry name" value="UreD"/>
</dbReference>
<dbReference type="PANTHER" id="PTHR33643">
    <property type="entry name" value="UREASE ACCESSORY PROTEIN D"/>
    <property type="match status" value="1"/>
</dbReference>
<dbReference type="PANTHER" id="PTHR33643:SF1">
    <property type="entry name" value="UREASE ACCESSORY PROTEIN D"/>
    <property type="match status" value="1"/>
</dbReference>
<dbReference type="Pfam" id="PF01774">
    <property type="entry name" value="UreD"/>
    <property type="match status" value="1"/>
</dbReference>
<keyword id="KW-0143">Chaperone</keyword>
<keyword id="KW-0963">Cytoplasm</keyword>
<keyword id="KW-0996">Nickel insertion</keyword>
<organism>
    <name type="scientific">Brucella melitensis biotype 1 (strain ATCC 23456 / CCUG 17765 / NCTC 10094 / 16M)</name>
    <dbReference type="NCBI Taxonomy" id="224914"/>
    <lineage>
        <taxon>Bacteria</taxon>
        <taxon>Pseudomonadati</taxon>
        <taxon>Pseudomonadota</taxon>
        <taxon>Alphaproteobacteria</taxon>
        <taxon>Hyphomicrobiales</taxon>
        <taxon>Brucellaceae</taxon>
        <taxon>Brucella/Ochrobactrum group</taxon>
        <taxon>Brucella</taxon>
    </lineage>
</organism>